<proteinExistence type="inferred from homology"/>
<comment type="function">
    <text evidence="1">This protein is one of the early assembly proteins of the 50S ribosomal subunit, although it is not seen to bind rRNA by itself. It is important during the early stages of 50S assembly.</text>
</comment>
<comment type="subunit">
    <text evidence="1">Part of the 50S ribosomal subunit.</text>
</comment>
<comment type="similarity">
    <text evidence="1">Belongs to the universal ribosomal protein uL13 family.</text>
</comment>
<protein>
    <recommendedName>
        <fullName evidence="1">Large ribosomal subunit protein uL13</fullName>
    </recommendedName>
    <alternativeName>
        <fullName evidence="2">50S ribosomal protein L13</fullName>
    </alternativeName>
</protein>
<keyword id="KW-1185">Reference proteome</keyword>
<keyword id="KW-0687">Ribonucleoprotein</keyword>
<keyword id="KW-0689">Ribosomal protein</keyword>
<name>RL13_AERHH</name>
<reference key="1">
    <citation type="journal article" date="2006" name="J. Bacteriol.">
        <title>Genome sequence of Aeromonas hydrophila ATCC 7966T: jack of all trades.</title>
        <authorList>
            <person name="Seshadri R."/>
            <person name="Joseph S.W."/>
            <person name="Chopra A.K."/>
            <person name="Sha J."/>
            <person name="Shaw J."/>
            <person name="Graf J."/>
            <person name="Haft D.H."/>
            <person name="Wu M."/>
            <person name="Ren Q."/>
            <person name="Rosovitz M.J."/>
            <person name="Madupu R."/>
            <person name="Tallon L."/>
            <person name="Kim M."/>
            <person name="Jin S."/>
            <person name="Vuong H."/>
            <person name="Stine O.C."/>
            <person name="Ali A."/>
            <person name="Horneman A.J."/>
            <person name="Heidelberg J.F."/>
        </authorList>
    </citation>
    <scope>NUCLEOTIDE SEQUENCE [LARGE SCALE GENOMIC DNA]</scope>
    <source>
        <strain>ATCC 7966 / DSM 30187 / BCRC 13018 / CCUG 14551 / JCM 1027 / KCTC 2358 / NCIMB 9240 / NCTC 8049</strain>
    </source>
</reference>
<sequence>MKTFVAKPETVKRDWYIVDAEGKTLGRIATEIAARLRGKHKAEYTPHVDTGDYIIVVNAEKVHVTGKKFTDKMYHAHSGFPGGIKSISFDKLIQRKPEMVIEAAVKGMLPKGPLGRAMFRKLKVYAGAEHAHAAQQPQVLDI</sequence>
<gene>
    <name evidence="1" type="primary">rplM</name>
    <name type="ordered locus">AHA_3905</name>
</gene>
<organism>
    <name type="scientific">Aeromonas hydrophila subsp. hydrophila (strain ATCC 7966 / DSM 30187 / BCRC 13018 / CCUG 14551 / JCM 1027 / KCTC 2358 / NCIMB 9240 / NCTC 8049)</name>
    <dbReference type="NCBI Taxonomy" id="380703"/>
    <lineage>
        <taxon>Bacteria</taxon>
        <taxon>Pseudomonadati</taxon>
        <taxon>Pseudomonadota</taxon>
        <taxon>Gammaproteobacteria</taxon>
        <taxon>Aeromonadales</taxon>
        <taxon>Aeromonadaceae</taxon>
        <taxon>Aeromonas</taxon>
    </lineage>
</organism>
<evidence type="ECO:0000255" key="1">
    <source>
        <dbReference type="HAMAP-Rule" id="MF_01366"/>
    </source>
</evidence>
<evidence type="ECO:0000305" key="2"/>
<accession>A0KPZ3</accession>
<feature type="chain" id="PRO_1000055336" description="Large ribosomal subunit protein uL13">
    <location>
        <begin position="1"/>
        <end position="142"/>
    </location>
</feature>
<dbReference type="EMBL" id="CP000462">
    <property type="protein sequence ID" value="ABK38172.1"/>
    <property type="molecule type" value="Genomic_DNA"/>
</dbReference>
<dbReference type="RefSeq" id="WP_005336289.1">
    <property type="nucleotide sequence ID" value="NC_008570.1"/>
</dbReference>
<dbReference type="RefSeq" id="YP_858344.1">
    <property type="nucleotide sequence ID" value="NC_008570.1"/>
</dbReference>
<dbReference type="SMR" id="A0KPZ3"/>
<dbReference type="STRING" id="380703.AHA_3905"/>
<dbReference type="EnsemblBacteria" id="ABK38172">
    <property type="protein sequence ID" value="ABK38172"/>
    <property type="gene ID" value="AHA_3905"/>
</dbReference>
<dbReference type="GeneID" id="97858429"/>
<dbReference type="KEGG" id="aha:AHA_3905"/>
<dbReference type="PATRIC" id="fig|380703.7.peg.3875"/>
<dbReference type="eggNOG" id="COG0102">
    <property type="taxonomic scope" value="Bacteria"/>
</dbReference>
<dbReference type="HOGENOM" id="CLU_082184_2_2_6"/>
<dbReference type="OrthoDB" id="9801330at2"/>
<dbReference type="PRO" id="PR:A0KPZ3"/>
<dbReference type="Proteomes" id="UP000000756">
    <property type="component" value="Chromosome"/>
</dbReference>
<dbReference type="GO" id="GO:0022625">
    <property type="term" value="C:cytosolic large ribosomal subunit"/>
    <property type="evidence" value="ECO:0007669"/>
    <property type="project" value="TreeGrafter"/>
</dbReference>
<dbReference type="GO" id="GO:0003729">
    <property type="term" value="F:mRNA binding"/>
    <property type="evidence" value="ECO:0007669"/>
    <property type="project" value="TreeGrafter"/>
</dbReference>
<dbReference type="GO" id="GO:0003735">
    <property type="term" value="F:structural constituent of ribosome"/>
    <property type="evidence" value="ECO:0007669"/>
    <property type="project" value="InterPro"/>
</dbReference>
<dbReference type="GO" id="GO:0017148">
    <property type="term" value="P:negative regulation of translation"/>
    <property type="evidence" value="ECO:0007669"/>
    <property type="project" value="TreeGrafter"/>
</dbReference>
<dbReference type="GO" id="GO:0006412">
    <property type="term" value="P:translation"/>
    <property type="evidence" value="ECO:0007669"/>
    <property type="project" value="UniProtKB-UniRule"/>
</dbReference>
<dbReference type="CDD" id="cd00392">
    <property type="entry name" value="Ribosomal_L13"/>
    <property type="match status" value="1"/>
</dbReference>
<dbReference type="FunFam" id="3.90.1180.10:FF:000001">
    <property type="entry name" value="50S ribosomal protein L13"/>
    <property type="match status" value="1"/>
</dbReference>
<dbReference type="Gene3D" id="3.90.1180.10">
    <property type="entry name" value="Ribosomal protein L13"/>
    <property type="match status" value="1"/>
</dbReference>
<dbReference type="HAMAP" id="MF_01366">
    <property type="entry name" value="Ribosomal_uL13"/>
    <property type="match status" value="1"/>
</dbReference>
<dbReference type="InterPro" id="IPR005822">
    <property type="entry name" value="Ribosomal_uL13"/>
</dbReference>
<dbReference type="InterPro" id="IPR005823">
    <property type="entry name" value="Ribosomal_uL13_bac-type"/>
</dbReference>
<dbReference type="InterPro" id="IPR023563">
    <property type="entry name" value="Ribosomal_uL13_CS"/>
</dbReference>
<dbReference type="InterPro" id="IPR036899">
    <property type="entry name" value="Ribosomal_uL13_sf"/>
</dbReference>
<dbReference type="NCBIfam" id="TIGR01066">
    <property type="entry name" value="rplM_bact"/>
    <property type="match status" value="1"/>
</dbReference>
<dbReference type="PANTHER" id="PTHR11545:SF2">
    <property type="entry name" value="LARGE RIBOSOMAL SUBUNIT PROTEIN UL13M"/>
    <property type="match status" value="1"/>
</dbReference>
<dbReference type="PANTHER" id="PTHR11545">
    <property type="entry name" value="RIBOSOMAL PROTEIN L13"/>
    <property type="match status" value="1"/>
</dbReference>
<dbReference type="Pfam" id="PF00572">
    <property type="entry name" value="Ribosomal_L13"/>
    <property type="match status" value="1"/>
</dbReference>
<dbReference type="PIRSF" id="PIRSF002181">
    <property type="entry name" value="Ribosomal_L13"/>
    <property type="match status" value="1"/>
</dbReference>
<dbReference type="SUPFAM" id="SSF52161">
    <property type="entry name" value="Ribosomal protein L13"/>
    <property type="match status" value="1"/>
</dbReference>
<dbReference type="PROSITE" id="PS00783">
    <property type="entry name" value="RIBOSOMAL_L13"/>
    <property type="match status" value="1"/>
</dbReference>